<sequence length="321" mass="35708">MGELPLDINIQEPRWDQRTFLGRARHFFTVTDPRNLLLSGAQLEASRNIVQNYRAGIVTPGLTEDQLWRAKYVYDSAFHPDTGEKVVLIGRMSAQVPMNMTITGCMLIFYRKTPTVVFWQWLNQSFNAVVNYSNRSGDAPITVRQLGMAYVSATTGAVATALGLKSLTKHLPPLVGRFVPFAAVAAANCINIPLMRQRELQVGIPVTNEQGQRLGHSVAAAKKGIFQVVISRICMAIPAMAIPPVIMDTLEKKDFLKRRPWLGAPLQMGLVGFCLVFATPLCCALFPQRSSIHVSRLEPELRAQIQEQNPSIEVVYYNKGL</sequence>
<feature type="chain" id="PRO_0000350612" description="Sideroflexin-3">
    <location>
        <begin position="1"/>
        <end position="321"/>
    </location>
</feature>
<feature type="transmembrane region" description="Helical" evidence="2">
    <location>
        <begin position="146"/>
        <end position="164"/>
    </location>
</feature>
<feature type="transmembrane region" description="Helical" evidence="2">
    <location>
        <begin position="174"/>
        <end position="194"/>
    </location>
</feature>
<feature type="transmembrane region" description="Helical" evidence="2">
    <location>
        <begin position="226"/>
        <end position="246"/>
    </location>
</feature>
<feature type="transmembrane region" description="Helical" evidence="2">
    <location>
        <begin position="266"/>
        <end position="286"/>
    </location>
</feature>
<feature type="modified residue" description="N-acetylmethionine" evidence="1">
    <location>
        <position position="1"/>
    </location>
</feature>
<name>SFXN3_BOVIN</name>
<dbReference type="EMBL" id="BC149158">
    <property type="protein sequence ID" value="AAI49159.1"/>
    <property type="molecule type" value="mRNA"/>
</dbReference>
<dbReference type="RefSeq" id="NP_001095416.1">
    <property type="nucleotide sequence ID" value="NM_001101946.1"/>
</dbReference>
<dbReference type="BioGRID" id="168386">
    <property type="interactions" value="1"/>
</dbReference>
<dbReference type="FunCoup" id="A6QP55">
    <property type="interactions" value="680"/>
</dbReference>
<dbReference type="STRING" id="9913.ENSBTAP00000062333"/>
<dbReference type="PaxDb" id="9913-ENSBTAP00000006601"/>
<dbReference type="GeneID" id="511755"/>
<dbReference type="KEGG" id="bta:511755"/>
<dbReference type="CTD" id="81855"/>
<dbReference type="VEuPathDB" id="HostDB:ENSBTAG00000005015"/>
<dbReference type="eggNOG" id="KOG3767">
    <property type="taxonomic scope" value="Eukaryota"/>
</dbReference>
<dbReference type="HOGENOM" id="CLU_039425_1_0_1"/>
<dbReference type="InParanoid" id="A6QP55"/>
<dbReference type="OMA" id="STPICCA"/>
<dbReference type="OrthoDB" id="6608471at2759"/>
<dbReference type="TreeFam" id="TF313205"/>
<dbReference type="Proteomes" id="UP000009136">
    <property type="component" value="Chromosome 26"/>
</dbReference>
<dbReference type="Bgee" id="ENSBTAG00000005015">
    <property type="expression patterns" value="Expressed in retina and 105 other cell types or tissues"/>
</dbReference>
<dbReference type="GO" id="GO:0005743">
    <property type="term" value="C:mitochondrial inner membrane"/>
    <property type="evidence" value="ECO:0000318"/>
    <property type="project" value="GO_Central"/>
</dbReference>
<dbReference type="GO" id="GO:0005739">
    <property type="term" value="C:mitochondrion"/>
    <property type="evidence" value="ECO:0000250"/>
    <property type="project" value="UniProtKB"/>
</dbReference>
<dbReference type="GO" id="GO:0015194">
    <property type="term" value="F:L-serine transmembrane transporter activity"/>
    <property type="evidence" value="ECO:0000250"/>
    <property type="project" value="UniProtKB"/>
</dbReference>
<dbReference type="GO" id="GO:0015075">
    <property type="term" value="F:monoatomic ion transmembrane transporter activity"/>
    <property type="evidence" value="ECO:0007669"/>
    <property type="project" value="InterPro"/>
</dbReference>
<dbReference type="GO" id="GO:0022857">
    <property type="term" value="F:transmembrane transporter activity"/>
    <property type="evidence" value="ECO:0000318"/>
    <property type="project" value="GO_Central"/>
</dbReference>
<dbReference type="GO" id="GO:1990542">
    <property type="term" value="P:mitochondrial transmembrane transport"/>
    <property type="evidence" value="ECO:0000250"/>
    <property type="project" value="UniProtKB"/>
</dbReference>
<dbReference type="GO" id="GO:0006730">
    <property type="term" value="P:one-carbon metabolic process"/>
    <property type="evidence" value="ECO:0000250"/>
    <property type="project" value="UniProtKB"/>
</dbReference>
<dbReference type="GO" id="GO:0140300">
    <property type="term" value="P:serine import into mitochondrion"/>
    <property type="evidence" value="ECO:0000250"/>
    <property type="project" value="UniProtKB"/>
</dbReference>
<dbReference type="InterPro" id="IPR004686">
    <property type="entry name" value="Mtc"/>
</dbReference>
<dbReference type="NCBIfam" id="TIGR00798">
    <property type="entry name" value="mtc"/>
    <property type="match status" value="1"/>
</dbReference>
<dbReference type="PANTHER" id="PTHR11153">
    <property type="entry name" value="SIDEROFLEXIN"/>
    <property type="match status" value="1"/>
</dbReference>
<dbReference type="PANTHER" id="PTHR11153:SF20">
    <property type="entry name" value="SIDEROFLEXIN-3"/>
    <property type="match status" value="1"/>
</dbReference>
<dbReference type="Pfam" id="PF03820">
    <property type="entry name" value="SFXNs"/>
    <property type="match status" value="1"/>
</dbReference>
<keyword id="KW-0007">Acetylation</keyword>
<keyword id="KW-0029">Amino-acid transport</keyword>
<keyword id="KW-0472">Membrane</keyword>
<keyword id="KW-0496">Mitochondrion</keyword>
<keyword id="KW-0554">One-carbon metabolism</keyword>
<keyword id="KW-1185">Reference proteome</keyword>
<keyword id="KW-0812">Transmembrane</keyword>
<keyword id="KW-1133">Transmembrane helix</keyword>
<keyword id="KW-0813">Transport</keyword>
<comment type="function">
    <text evidence="1">Mitochondrial serine transporter that mediates transport of serine into mitochondria, an important step of the one-carbon metabolism pathway. Mitochondrial serine is converted to glycine and formate, which then exits to the cytosol where it is used to generate the charged folates that serve as one-carbon donors.</text>
</comment>
<comment type="catalytic activity">
    <reaction evidence="1">
        <text>L-serine(in) = L-serine(out)</text>
        <dbReference type="Rhea" id="RHEA:35031"/>
        <dbReference type="ChEBI" id="CHEBI:33384"/>
    </reaction>
</comment>
<comment type="subcellular location">
    <subcellularLocation>
        <location evidence="1">Mitochondrion membrane</location>
        <topology evidence="2">Multi-pass membrane protein</topology>
    </subcellularLocation>
</comment>
<comment type="similarity">
    <text evidence="3">Belongs to the sideroflexin family.</text>
</comment>
<proteinExistence type="evidence at transcript level"/>
<accession>A6QP55</accession>
<protein>
    <recommendedName>
        <fullName>Sideroflexin-3</fullName>
    </recommendedName>
</protein>
<reference key="1">
    <citation type="submission" date="2007-07" db="EMBL/GenBank/DDBJ databases">
        <authorList>
            <consortium name="NIH - Mammalian Gene Collection (MGC) project"/>
        </authorList>
    </citation>
    <scope>NUCLEOTIDE SEQUENCE [LARGE SCALE MRNA]</scope>
    <source>
        <strain>Hereford</strain>
        <tissue>Fetal skin</tissue>
    </source>
</reference>
<gene>
    <name type="primary">SFXN3</name>
</gene>
<organism>
    <name type="scientific">Bos taurus</name>
    <name type="common">Bovine</name>
    <dbReference type="NCBI Taxonomy" id="9913"/>
    <lineage>
        <taxon>Eukaryota</taxon>
        <taxon>Metazoa</taxon>
        <taxon>Chordata</taxon>
        <taxon>Craniata</taxon>
        <taxon>Vertebrata</taxon>
        <taxon>Euteleostomi</taxon>
        <taxon>Mammalia</taxon>
        <taxon>Eutheria</taxon>
        <taxon>Laurasiatheria</taxon>
        <taxon>Artiodactyla</taxon>
        <taxon>Ruminantia</taxon>
        <taxon>Pecora</taxon>
        <taxon>Bovidae</taxon>
        <taxon>Bovinae</taxon>
        <taxon>Bos</taxon>
    </lineage>
</organism>
<evidence type="ECO:0000250" key="1">
    <source>
        <dbReference type="UniProtKB" id="Q9BWM7"/>
    </source>
</evidence>
<evidence type="ECO:0000255" key="2"/>
<evidence type="ECO:0000305" key="3"/>